<evidence type="ECO:0000255" key="1">
    <source>
        <dbReference type="HAMAP-Rule" id="MF_00374"/>
    </source>
</evidence>
<evidence type="ECO:0000305" key="2"/>
<organism>
    <name type="scientific">Thioalkalivibrio sulfidiphilus (strain HL-EbGR7)</name>
    <dbReference type="NCBI Taxonomy" id="396588"/>
    <lineage>
        <taxon>Bacteria</taxon>
        <taxon>Pseudomonadati</taxon>
        <taxon>Pseudomonadota</taxon>
        <taxon>Gammaproteobacteria</taxon>
        <taxon>Chromatiales</taxon>
        <taxon>Ectothiorhodospiraceae</taxon>
        <taxon>Thioalkalivibrio</taxon>
    </lineage>
</organism>
<accession>B8GV50</accession>
<keyword id="KW-1185">Reference proteome</keyword>
<keyword id="KW-0687">Ribonucleoprotein</keyword>
<keyword id="KW-0689">Ribosomal protein</keyword>
<name>RL29_THISH</name>
<sequence length="65" mass="7614">MKASELREKNNEELKKELLELLREQFGLRMQRGAGQLARPDRFSKIRKDIARIKTVMNERSVAGE</sequence>
<feature type="chain" id="PRO_1000194041" description="Large ribosomal subunit protein uL29">
    <location>
        <begin position="1"/>
        <end position="65"/>
    </location>
</feature>
<reference key="1">
    <citation type="journal article" date="2011" name="Stand. Genomic Sci.">
        <title>Complete genome sequence of 'Thioalkalivibrio sulfidophilus' HL-EbGr7.</title>
        <authorList>
            <person name="Muyzer G."/>
            <person name="Sorokin D.Y."/>
            <person name="Mavromatis K."/>
            <person name="Lapidus A."/>
            <person name="Clum A."/>
            <person name="Ivanova N."/>
            <person name="Pati A."/>
            <person name="d'Haeseleer P."/>
            <person name="Woyke T."/>
            <person name="Kyrpides N.C."/>
        </authorList>
    </citation>
    <scope>NUCLEOTIDE SEQUENCE [LARGE SCALE GENOMIC DNA]</scope>
    <source>
        <strain>HL-EbGR7</strain>
    </source>
</reference>
<gene>
    <name evidence="1" type="primary">rpmC</name>
    <name type="ordered locus">Tgr7_2316</name>
</gene>
<proteinExistence type="inferred from homology"/>
<comment type="similarity">
    <text evidence="1">Belongs to the universal ribosomal protein uL29 family.</text>
</comment>
<dbReference type="EMBL" id="CP001339">
    <property type="protein sequence ID" value="ACL73396.1"/>
    <property type="molecule type" value="Genomic_DNA"/>
</dbReference>
<dbReference type="RefSeq" id="WP_012638872.1">
    <property type="nucleotide sequence ID" value="NC_011901.1"/>
</dbReference>
<dbReference type="SMR" id="B8GV50"/>
<dbReference type="STRING" id="396588.Tgr7_2316"/>
<dbReference type="KEGG" id="tgr:Tgr7_2316"/>
<dbReference type="eggNOG" id="COG0255">
    <property type="taxonomic scope" value="Bacteria"/>
</dbReference>
<dbReference type="HOGENOM" id="CLU_158491_1_2_6"/>
<dbReference type="OrthoDB" id="9815192at2"/>
<dbReference type="Proteomes" id="UP000002383">
    <property type="component" value="Chromosome"/>
</dbReference>
<dbReference type="GO" id="GO:0022625">
    <property type="term" value="C:cytosolic large ribosomal subunit"/>
    <property type="evidence" value="ECO:0007669"/>
    <property type="project" value="TreeGrafter"/>
</dbReference>
<dbReference type="GO" id="GO:0003735">
    <property type="term" value="F:structural constituent of ribosome"/>
    <property type="evidence" value="ECO:0007669"/>
    <property type="project" value="InterPro"/>
</dbReference>
<dbReference type="GO" id="GO:0006412">
    <property type="term" value="P:translation"/>
    <property type="evidence" value="ECO:0007669"/>
    <property type="project" value="UniProtKB-UniRule"/>
</dbReference>
<dbReference type="CDD" id="cd00427">
    <property type="entry name" value="Ribosomal_L29_HIP"/>
    <property type="match status" value="1"/>
</dbReference>
<dbReference type="FunFam" id="1.10.287.310:FF:000001">
    <property type="entry name" value="50S ribosomal protein L29"/>
    <property type="match status" value="1"/>
</dbReference>
<dbReference type="Gene3D" id="1.10.287.310">
    <property type="match status" value="1"/>
</dbReference>
<dbReference type="HAMAP" id="MF_00374">
    <property type="entry name" value="Ribosomal_uL29"/>
    <property type="match status" value="1"/>
</dbReference>
<dbReference type="InterPro" id="IPR050063">
    <property type="entry name" value="Ribosomal_protein_uL29"/>
</dbReference>
<dbReference type="InterPro" id="IPR001854">
    <property type="entry name" value="Ribosomal_uL29"/>
</dbReference>
<dbReference type="InterPro" id="IPR036049">
    <property type="entry name" value="Ribosomal_uL29_sf"/>
</dbReference>
<dbReference type="NCBIfam" id="TIGR00012">
    <property type="entry name" value="L29"/>
    <property type="match status" value="1"/>
</dbReference>
<dbReference type="PANTHER" id="PTHR10916">
    <property type="entry name" value="60S RIBOSOMAL PROTEIN L35/50S RIBOSOMAL PROTEIN L29"/>
    <property type="match status" value="1"/>
</dbReference>
<dbReference type="PANTHER" id="PTHR10916:SF0">
    <property type="entry name" value="LARGE RIBOSOMAL SUBUNIT PROTEIN UL29C"/>
    <property type="match status" value="1"/>
</dbReference>
<dbReference type="Pfam" id="PF00831">
    <property type="entry name" value="Ribosomal_L29"/>
    <property type="match status" value="1"/>
</dbReference>
<dbReference type="SUPFAM" id="SSF46561">
    <property type="entry name" value="Ribosomal protein L29 (L29p)"/>
    <property type="match status" value="1"/>
</dbReference>
<protein>
    <recommendedName>
        <fullName evidence="1">Large ribosomal subunit protein uL29</fullName>
    </recommendedName>
    <alternativeName>
        <fullName evidence="2">50S ribosomal protein L29</fullName>
    </alternativeName>
</protein>